<comment type="subcellular location">
    <subcellularLocation>
        <location evidence="1">Cytoplasm</location>
    </subcellularLocation>
</comment>
<comment type="similarity">
    <text evidence="1">Belongs to the CutC family.</text>
</comment>
<comment type="caution">
    <text evidence="1">Once thought to be involved in copper homeostasis, experiments in E.coli have shown this is not the case.</text>
</comment>
<dbReference type="EMBL" id="CU468135">
    <property type="protein sequence ID" value="CAO96524.1"/>
    <property type="molecule type" value="Genomic_DNA"/>
</dbReference>
<dbReference type="RefSeq" id="WP_012441218.1">
    <property type="nucleotide sequence ID" value="NC_010694.1"/>
</dbReference>
<dbReference type="SMR" id="B2VJB9"/>
<dbReference type="STRING" id="465817.ETA_14780"/>
<dbReference type="KEGG" id="eta:ETA_14780"/>
<dbReference type="eggNOG" id="COG3142">
    <property type="taxonomic scope" value="Bacteria"/>
</dbReference>
<dbReference type="HOGENOM" id="CLU_050555_3_1_6"/>
<dbReference type="OrthoDB" id="9815677at2"/>
<dbReference type="Proteomes" id="UP000001726">
    <property type="component" value="Chromosome"/>
</dbReference>
<dbReference type="GO" id="GO:0005737">
    <property type="term" value="C:cytoplasm"/>
    <property type="evidence" value="ECO:0007669"/>
    <property type="project" value="UniProtKB-SubCell"/>
</dbReference>
<dbReference type="GO" id="GO:0005507">
    <property type="term" value="F:copper ion binding"/>
    <property type="evidence" value="ECO:0007669"/>
    <property type="project" value="TreeGrafter"/>
</dbReference>
<dbReference type="FunFam" id="3.20.20.380:FF:000001">
    <property type="entry name" value="Copper homeostasis protein CutC"/>
    <property type="match status" value="1"/>
</dbReference>
<dbReference type="Gene3D" id="3.20.20.380">
    <property type="entry name" value="Copper homeostasis (CutC) domain"/>
    <property type="match status" value="1"/>
</dbReference>
<dbReference type="HAMAP" id="MF_00795">
    <property type="entry name" value="CutC"/>
    <property type="match status" value="1"/>
</dbReference>
<dbReference type="InterPro" id="IPR005627">
    <property type="entry name" value="CutC-like"/>
</dbReference>
<dbReference type="InterPro" id="IPR036822">
    <property type="entry name" value="CutC-like_dom_sf"/>
</dbReference>
<dbReference type="NCBIfam" id="NF008603">
    <property type="entry name" value="PRK11572.1"/>
    <property type="match status" value="1"/>
</dbReference>
<dbReference type="PANTHER" id="PTHR12598">
    <property type="entry name" value="COPPER HOMEOSTASIS PROTEIN CUTC"/>
    <property type="match status" value="1"/>
</dbReference>
<dbReference type="PANTHER" id="PTHR12598:SF0">
    <property type="entry name" value="COPPER HOMEOSTASIS PROTEIN CUTC HOMOLOG"/>
    <property type="match status" value="1"/>
</dbReference>
<dbReference type="Pfam" id="PF03932">
    <property type="entry name" value="CutC"/>
    <property type="match status" value="1"/>
</dbReference>
<dbReference type="SUPFAM" id="SSF110395">
    <property type="entry name" value="CutC-like"/>
    <property type="match status" value="1"/>
</dbReference>
<reference key="1">
    <citation type="journal article" date="2008" name="Environ. Microbiol.">
        <title>The genome of Erwinia tasmaniensis strain Et1/99, a non-pathogenic bacterium in the genus Erwinia.</title>
        <authorList>
            <person name="Kube M."/>
            <person name="Migdoll A.M."/>
            <person name="Mueller I."/>
            <person name="Kuhl H."/>
            <person name="Beck A."/>
            <person name="Reinhardt R."/>
            <person name="Geider K."/>
        </authorList>
    </citation>
    <scope>NUCLEOTIDE SEQUENCE [LARGE SCALE GENOMIC DNA]</scope>
    <source>
        <strain>DSM 17950 / CFBP 7177 / CIP 109463 / NCPPB 4357 / Et1/99</strain>
    </source>
</reference>
<protein>
    <recommendedName>
        <fullName evidence="1">PF03932 family protein CutC</fullName>
    </recommendedName>
</protein>
<evidence type="ECO:0000255" key="1">
    <source>
        <dbReference type="HAMAP-Rule" id="MF_00795"/>
    </source>
</evidence>
<gene>
    <name evidence="1" type="primary">cutC</name>
    <name type="ordered locus">ETA_14780</name>
</gene>
<feature type="chain" id="PRO_1000133838" description="PF03932 family protein CutC">
    <location>
        <begin position="1"/>
        <end position="251"/>
    </location>
</feature>
<accession>B2VJB9</accession>
<sequence length="251" mass="27205">MRQLEICCYGVECAVTAERAGADRIELCSAPAEGGLTPSAGALDSARRRVSIPVHPIVRPRGGDFCYSPSEFELMKSDISFIREQGFPGLVIGLLDVDGHVDQRRMRQVMQLSQGMDVTFHRAFDLCHNPLLTMAQIADLGVTRILTSGQQQSAESGLPLIRELIRQSNGPMIMAGAGVRLSNLQKFIDAGVMELHSSASQRVSSTMRYRKAGVSMCSETEVDEFSRTCVDADVVAAMKNVLMAASPGRVA</sequence>
<name>CUTC_ERWT9</name>
<keyword id="KW-0963">Cytoplasm</keyword>
<keyword id="KW-1185">Reference proteome</keyword>
<proteinExistence type="inferred from homology"/>
<organism>
    <name type="scientific">Erwinia tasmaniensis (strain DSM 17950 / CFBP 7177 / CIP 109463 / NCPPB 4357 / Et1/99)</name>
    <dbReference type="NCBI Taxonomy" id="465817"/>
    <lineage>
        <taxon>Bacteria</taxon>
        <taxon>Pseudomonadati</taxon>
        <taxon>Pseudomonadota</taxon>
        <taxon>Gammaproteobacteria</taxon>
        <taxon>Enterobacterales</taxon>
        <taxon>Erwiniaceae</taxon>
        <taxon>Erwinia</taxon>
    </lineage>
</organism>